<reference key="1">
    <citation type="journal article" date="2004" name="Nat. Biotechnol.">
        <title>The genome sequence of the anaerobic, sulfate-reducing bacterium Desulfovibrio vulgaris Hildenborough.</title>
        <authorList>
            <person name="Heidelberg J.F."/>
            <person name="Seshadri R."/>
            <person name="Haveman S.A."/>
            <person name="Hemme C.L."/>
            <person name="Paulsen I.T."/>
            <person name="Kolonay J.F."/>
            <person name="Eisen J.A."/>
            <person name="Ward N.L."/>
            <person name="Methe B.A."/>
            <person name="Brinkac L.M."/>
            <person name="Daugherty S.C."/>
            <person name="DeBoy R.T."/>
            <person name="Dodson R.J."/>
            <person name="Durkin A.S."/>
            <person name="Madupu R."/>
            <person name="Nelson W.C."/>
            <person name="Sullivan S.A."/>
            <person name="Fouts D.E."/>
            <person name="Haft D.H."/>
            <person name="Selengut J."/>
            <person name="Peterson J.D."/>
            <person name="Davidsen T.M."/>
            <person name="Zafar N."/>
            <person name="Zhou L."/>
            <person name="Radune D."/>
            <person name="Dimitrov G."/>
            <person name="Hance M."/>
            <person name="Tran K."/>
            <person name="Khouri H.M."/>
            <person name="Gill J."/>
            <person name="Utterback T.R."/>
            <person name="Feldblyum T.V."/>
            <person name="Wall J.D."/>
            <person name="Voordouw G."/>
            <person name="Fraser C.M."/>
        </authorList>
    </citation>
    <scope>NUCLEOTIDE SEQUENCE [LARGE SCALE GENOMIC DNA]</scope>
    <source>
        <strain>ATCC 29579 / DSM 644 / CCUG 34227 / NCIMB 8303 / VKM B-1760 / Hildenborough</strain>
    </source>
</reference>
<feature type="chain" id="PRO_0000161357" description="UPF0213 protein DVU_3309">
    <location>
        <begin position="1"/>
        <end position="110"/>
    </location>
</feature>
<feature type="domain" description="GIY-YIG" evidence="1">
    <location>
        <begin position="8"/>
        <end position="83"/>
    </location>
</feature>
<keyword id="KW-1185">Reference proteome</keyword>
<dbReference type="EMBL" id="AE017285">
    <property type="protein sequence ID" value="AAS97777.1"/>
    <property type="molecule type" value="Genomic_DNA"/>
</dbReference>
<dbReference type="RefSeq" id="WP_010940565.1">
    <property type="nucleotide sequence ID" value="NC_002937.3"/>
</dbReference>
<dbReference type="RefSeq" id="YP_012517.1">
    <property type="nucleotide sequence ID" value="NC_002937.3"/>
</dbReference>
<dbReference type="SMR" id="Q725W6"/>
<dbReference type="STRING" id="882.DVU_3309"/>
<dbReference type="PaxDb" id="882-DVU_3309"/>
<dbReference type="EnsemblBacteria" id="AAS97777">
    <property type="protein sequence ID" value="AAS97777"/>
    <property type="gene ID" value="DVU_3309"/>
</dbReference>
<dbReference type="KEGG" id="dvu:DVU_3309"/>
<dbReference type="eggNOG" id="COG2827">
    <property type="taxonomic scope" value="Bacteria"/>
</dbReference>
<dbReference type="HOGENOM" id="CLU_135650_0_2_7"/>
<dbReference type="OrthoDB" id="287318at2"/>
<dbReference type="PhylomeDB" id="Q725W6"/>
<dbReference type="Proteomes" id="UP000002194">
    <property type="component" value="Chromosome"/>
</dbReference>
<dbReference type="CDD" id="cd10456">
    <property type="entry name" value="GIY-YIG_UPF0213"/>
    <property type="match status" value="1"/>
</dbReference>
<dbReference type="Gene3D" id="3.40.1440.10">
    <property type="entry name" value="GIY-YIG endonuclease"/>
    <property type="match status" value="1"/>
</dbReference>
<dbReference type="InterPro" id="IPR000305">
    <property type="entry name" value="GIY-YIG_endonuc"/>
</dbReference>
<dbReference type="InterPro" id="IPR035901">
    <property type="entry name" value="GIY-YIG_endonuc_sf"/>
</dbReference>
<dbReference type="InterPro" id="IPR050190">
    <property type="entry name" value="UPF0213_domain"/>
</dbReference>
<dbReference type="PANTHER" id="PTHR34477">
    <property type="entry name" value="UPF0213 PROTEIN YHBQ"/>
    <property type="match status" value="1"/>
</dbReference>
<dbReference type="PANTHER" id="PTHR34477:SF1">
    <property type="entry name" value="UPF0213 PROTEIN YHBQ"/>
    <property type="match status" value="1"/>
</dbReference>
<dbReference type="Pfam" id="PF01541">
    <property type="entry name" value="GIY-YIG"/>
    <property type="match status" value="1"/>
</dbReference>
<dbReference type="SUPFAM" id="SSF82771">
    <property type="entry name" value="GIY-YIG endonuclease"/>
    <property type="match status" value="1"/>
</dbReference>
<dbReference type="PROSITE" id="PS50164">
    <property type="entry name" value="GIY_YIG"/>
    <property type="match status" value="1"/>
</dbReference>
<accession>Q725W6</accession>
<evidence type="ECO:0000255" key="1">
    <source>
        <dbReference type="PROSITE-ProRule" id="PRU00977"/>
    </source>
</evidence>
<evidence type="ECO:0000305" key="2"/>
<comment type="similarity">
    <text evidence="2">Belongs to the UPF0213 family.</text>
</comment>
<organism>
    <name type="scientific">Nitratidesulfovibrio vulgaris (strain ATCC 29579 / DSM 644 / CCUG 34227 / NCIMB 8303 / VKM B-1760 / Hildenborough)</name>
    <name type="common">Desulfovibrio vulgaris</name>
    <dbReference type="NCBI Taxonomy" id="882"/>
    <lineage>
        <taxon>Bacteria</taxon>
        <taxon>Pseudomonadati</taxon>
        <taxon>Thermodesulfobacteriota</taxon>
        <taxon>Desulfovibrionia</taxon>
        <taxon>Desulfovibrionales</taxon>
        <taxon>Desulfovibrionaceae</taxon>
        <taxon>Nitratidesulfovibrio</taxon>
    </lineage>
</organism>
<gene>
    <name type="ordered locus">DVU_3309</name>
</gene>
<proteinExistence type="inferred from homology"/>
<protein>
    <recommendedName>
        <fullName>UPF0213 protein DVU_3309</fullName>
    </recommendedName>
</protein>
<name>Y3309_NITV2</name>
<sequence length="110" mass="12166">MPNGKADEVWFVYLLRCADGTLYCGVTNNIERRLTQHHRGRGARYTRGRAPFILLGHAPFPGRGEAQRVEYRIKRQPTDQKLACLATIGGDAFVAGALQSAPAEGITWNP</sequence>